<comment type="similarity">
    <text evidence="1">Belongs to the UPF0284 family.</text>
</comment>
<feature type="chain" id="PRO_1000064867" description="UPF0284 protein Pcal_1534">
    <location>
        <begin position="1"/>
        <end position="336"/>
    </location>
</feature>
<accession>A3MWD6</accession>
<protein>
    <recommendedName>
        <fullName evidence="1">UPF0284 protein Pcal_1534</fullName>
    </recommendedName>
</protein>
<dbReference type="EMBL" id="CP000561">
    <property type="protein sequence ID" value="ABO08953.1"/>
    <property type="molecule type" value="Genomic_DNA"/>
</dbReference>
<dbReference type="RefSeq" id="WP_011850211.1">
    <property type="nucleotide sequence ID" value="NC_009073.1"/>
</dbReference>
<dbReference type="SMR" id="A3MWD6"/>
<dbReference type="STRING" id="410359.Pcal_1534"/>
<dbReference type="GeneID" id="4909182"/>
<dbReference type="KEGG" id="pcl:Pcal_1534"/>
<dbReference type="eggNOG" id="arCOG04272">
    <property type="taxonomic scope" value="Archaea"/>
</dbReference>
<dbReference type="HOGENOM" id="CLU_053134_0_0_2"/>
<dbReference type="OrthoDB" id="9136at2157"/>
<dbReference type="Proteomes" id="UP000001431">
    <property type="component" value="Chromosome"/>
</dbReference>
<dbReference type="GO" id="GO:0008939">
    <property type="term" value="F:nicotinate-nucleotide-dimethylbenzimidazole phosphoribosyltransferase activity"/>
    <property type="evidence" value="ECO:0007669"/>
    <property type="project" value="InterPro"/>
</dbReference>
<dbReference type="CDD" id="cd02439">
    <property type="entry name" value="DMB-PRT_CobT"/>
    <property type="match status" value="1"/>
</dbReference>
<dbReference type="Gene3D" id="3.40.50.10210">
    <property type="match status" value="1"/>
</dbReference>
<dbReference type="HAMAP" id="MF_01086">
    <property type="entry name" value="UPF0284"/>
    <property type="match status" value="1"/>
</dbReference>
<dbReference type="InterPro" id="IPR003200">
    <property type="entry name" value="Nict_dMeBzImd_PRibTrfase"/>
</dbReference>
<dbReference type="InterPro" id="IPR002805">
    <property type="entry name" value="Nict_dMeBzImd_PRibTrfase_arc"/>
</dbReference>
<dbReference type="InterPro" id="IPR036087">
    <property type="entry name" value="Nict_dMeBzImd_PRibTrfase_sf"/>
</dbReference>
<dbReference type="NCBIfam" id="TIGR00303">
    <property type="entry name" value="nicotinate mononucleotide-dependent phosphoribosyltransferase CobT"/>
    <property type="match status" value="1"/>
</dbReference>
<dbReference type="NCBIfam" id="NF003368">
    <property type="entry name" value="PRK04447.1-1"/>
    <property type="match status" value="1"/>
</dbReference>
<dbReference type="NCBIfam" id="NF003372">
    <property type="entry name" value="PRK04447.1-5"/>
    <property type="match status" value="1"/>
</dbReference>
<dbReference type="PANTHER" id="PTHR38811">
    <property type="match status" value="1"/>
</dbReference>
<dbReference type="PANTHER" id="PTHR38811:SF1">
    <property type="entry name" value="UPF0284 PROTEIN SLL1500"/>
    <property type="match status" value="1"/>
</dbReference>
<dbReference type="SUPFAM" id="SSF52733">
    <property type="entry name" value="Nicotinate mononucleotide:5,6-dimethylbenzimidazole phosphoribosyltransferase (CobT)"/>
    <property type="match status" value="1"/>
</dbReference>
<evidence type="ECO:0000255" key="1">
    <source>
        <dbReference type="HAMAP-Rule" id="MF_01086"/>
    </source>
</evidence>
<name>Y1534_PYRCJ</name>
<gene>
    <name type="ordered locus">Pcal_1534</name>
</gene>
<proteinExistence type="inferred from homology"/>
<reference key="1">
    <citation type="submission" date="2007-02" db="EMBL/GenBank/DDBJ databases">
        <title>Complete sequence of Pyrobaculum calidifontis JCM 11548.</title>
        <authorList>
            <consortium name="US DOE Joint Genome Institute"/>
            <person name="Copeland A."/>
            <person name="Lucas S."/>
            <person name="Lapidus A."/>
            <person name="Barry K."/>
            <person name="Glavina del Rio T."/>
            <person name="Dalin E."/>
            <person name="Tice H."/>
            <person name="Pitluck S."/>
            <person name="Chain P."/>
            <person name="Malfatti S."/>
            <person name="Shin M."/>
            <person name="Vergez L."/>
            <person name="Schmutz J."/>
            <person name="Larimer F."/>
            <person name="Land M."/>
            <person name="Hauser L."/>
            <person name="Kyrpides N."/>
            <person name="Mikhailova N."/>
            <person name="Cozen A.E."/>
            <person name="Fitz-Gibbon S.T."/>
            <person name="House C.H."/>
            <person name="Saltikov C."/>
            <person name="Lowe T.M."/>
            <person name="Richardson P."/>
        </authorList>
    </citation>
    <scope>NUCLEOTIDE SEQUENCE [LARGE SCALE GENOMIC DNA]</scope>
    <source>
        <strain>DSM 21063 / JCM 11548 / VA1</strain>
    </source>
</reference>
<sequence length="336" mass="35133">MNLKPAIFAVVIGTTDVSLIPGITVAGATPELTHYTPALDVEYLLTGRPITLDVVPVTPDGIPTPALVTRAVAFDVPKLVVNAGARVRPRVPYVDLGGEPGGDIRRGPAMSCAAAEELASRGRMLGRELGRLGVVYLGESIPGGTTTAMAILVGLGYNAWGRTSSASPNNPKELKAQVVMDALERAKPPPDPLRVVCELGDPVHPALAAIALGVAEAGGVPVLAGGTQMAAAAAIYKAMGGDLAKLHVVTTRWIVEDKSADFLGLMAEVGVKNVHVATASFGESKYEGLRAYERGAVKEGVGMGGALFYAQSMGRDVLKLVEAEYERVWRYVKRGD</sequence>
<organism>
    <name type="scientific">Pyrobaculum calidifontis (strain DSM 21063 / JCM 11548 / VA1)</name>
    <dbReference type="NCBI Taxonomy" id="410359"/>
    <lineage>
        <taxon>Archaea</taxon>
        <taxon>Thermoproteota</taxon>
        <taxon>Thermoprotei</taxon>
        <taxon>Thermoproteales</taxon>
        <taxon>Thermoproteaceae</taxon>
        <taxon>Pyrobaculum</taxon>
    </lineage>
</organism>